<comment type="induction">
    <text evidence="1">Expressed in the late phase of the viral replicative cycle.</text>
</comment>
<comment type="similarity">
    <text evidence="2">Belongs to the asfivirus S183L family.</text>
</comment>
<gene>
    <name type="ordered locus">Ba71V-110</name>
    <name type="ORF">S183L</name>
</gene>
<reference key="1">
    <citation type="journal article" date="1995" name="Virology">
        <title>Analysis of the complete nucleotide sequence of African swine fever virus.</title>
        <authorList>
            <person name="Yanez R.J."/>
            <person name="Rodriguez J.M."/>
            <person name="Nogal M.L."/>
            <person name="Yuste L."/>
            <person name="Enriquez C."/>
            <person name="Rodriguez J.F."/>
            <person name="Vinuela E."/>
        </authorList>
    </citation>
    <scope>NUCLEOTIDE SEQUENCE [LARGE SCALE GENOMIC DNA]</scope>
</reference>
<reference key="2">
    <citation type="journal article" date="2020" name="J. Virol.">
        <title>The African Swine Fever Virus Transcriptome.</title>
        <authorList>
            <person name="Cackett G."/>
            <person name="Matelska D."/>
            <person name="Sykora M."/>
            <person name="Portugal R."/>
            <person name="Malecki M."/>
            <person name="Baehler J."/>
            <person name="Dixon L."/>
            <person name="Werner F."/>
        </authorList>
    </citation>
    <scope>INDUCTION</scope>
</reference>
<organismHost>
    <name type="scientific">Ornithodoros</name>
    <name type="common">relapsing fever ticks</name>
    <dbReference type="NCBI Taxonomy" id="6937"/>
</organismHost>
<organismHost>
    <name type="scientific">Sus scrofa</name>
    <name type="common">Pig</name>
    <dbReference type="NCBI Taxonomy" id="9823"/>
</organismHost>
<accession>Q65183</accession>
<proteinExistence type="evidence at transcript level"/>
<feature type="chain" id="PRO_0000373567" description="Uncharacterized protein S183L">
    <location>
        <begin position="1"/>
        <end position="183"/>
    </location>
</feature>
<evidence type="ECO:0000269" key="1">
    <source>
    </source>
</evidence>
<evidence type="ECO:0000305" key="2"/>
<dbReference type="EMBL" id="U18466">
    <property type="protein sequence ID" value="AAA65339.1"/>
    <property type="molecule type" value="Genomic_DNA"/>
</dbReference>
<dbReference type="RefSeq" id="NP_042803.1">
    <property type="nucleotide sequence ID" value="NC_001659.2"/>
</dbReference>
<dbReference type="SMR" id="Q65183"/>
<dbReference type="GeneID" id="22220339"/>
<dbReference type="KEGG" id="vg:22220339"/>
<dbReference type="Proteomes" id="UP000000624">
    <property type="component" value="Segment"/>
</dbReference>
<keyword id="KW-0426">Late protein</keyword>
<keyword id="KW-1185">Reference proteome</keyword>
<protein>
    <recommendedName>
        <fullName>Uncharacterized protein S183L</fullName>
        <shortName>pS183L</shortName>
    </recommendedName>
</protein>
<sequence length="183" mass="21792">MSVVVGGVEYSLNNWARYEIKRRAAELESVNYYPHCEYIMPEDIVVSILGSKPNCPFLEALKRFHDFLKKRRIIFKGEYLVIPWMGAQDVADMIHHVENRINLDHLEDLAHMLKLITYHKSFDTCINQAFEHLYAFKFPDANIETHELKHIRQLEKKMYGYILRLEKLQTVLTFYIEFLLKQV</sequence>
<organism>
    <name type="scientific">African swine fever virus (strain Badajoz 1971 Vero-adapted)</name>
    <name type="common">Ba71V</name>
    <name type="synonym">ASFV</name>
    <dbReference type="NCBI Taxonomy" id="10498"/>
    <lineage>
        <taxon>Viruses</taxon>
        <taxon>Varidnaviria</taxon>
        <taxon>Bamfordvirae</taxon>
        <taxon>Nucleocytoviricota</taxon>
        <taxon>Pokkesviricetes</taxon>
        <taxon>Asfuvirales</taxon>
        <taxon>Asfarviridae</taxon>
        <taxon>Asfivirus</taxon>
        <taxon>African swine fever virus</taxon>
    </lineage>
</organism>
<name>VF183_ASFB7</name>